<evidence type="ECO:0000255" key="1">
    <source>
        <dbReference type="HAMAP-Rule" id="MF_01080"/>
    </source>
</evidence>
<name>TRUB_STRSV</name>
<feature type="chain" id="PRO_1000084702" description="tRNA pseudouridine synthase B">
    <location>
        <begin position="1"/>
        <end position="292"/>
    </location>
</feature>
<feature type="active site" description="Nucleophile" evidence="1">
    <location>
        <position position="38"/>
    </location>
</feature>
<reference key="1">
    <citation type="journal article" date="2007" name="J. Bacteriol.">
        <title>Genome of the opportunistic pathogen Streptococcus sanguinis.</title>
        <authorList>
            <person name="Xu P."/>
            <person name="Alves J.M."/>
            <person name="Kitten T."/>
            <person name="Brown A."/>
            <person name="Chen Z."/>
            <person name="Ozaki L.S."/>
            <person name="Manque P."/>
            <person name="Ge X."/>
            <person name="Serrano M.G."/>
            <person name="Puiu D."/>
            <person name="Hendricks S."/>
            <person name="Wang Y."/>
            <person name="Chaplin M.D."/>
            <person name="Akan D."/>
            <person name="Paik S."/>
            <person name="Peterson D.L."/>
            <person name="Macrina F.L."/>
            <person name="Buck G.A."/>
        </authorList>
    </citation>
    <scope>NUCLEOTIDE SEQUENCE [LARGE SCALE GENOMIC DNA]</scope>
    <source>
        <strain>SK36</strain>
    </source>
</reference>
<accession>A3CMF2</accession>
<keyword id="KW-0413">Isomerase</keyword>
<keyword id="KW-1185">Reference proteome</keyword>
<keyword id="KW-0819">tRNA processing</keyword>
<gene>
    <name evidence="1" type="primary">truB</name>
    <name type="ordered locus">SSA_0935</name>
</gene>
<organism>
    <name type="scientific">Streptococcus sanguinis (strain SK36)</name>
    <dbReference type="NCBI Taxonomy" id="388919"/>
    <lineage>
        <taxon>Bacteria</taxon>
        <taxon>Bacillati</taxon>
        <taxon>Bacillota</taxon>
        <taxon>Bacilli</taxon>
        <taxon>Lactobacillales</taxon>
        <taxon>Streptococcaceae</taxon>
        <taxon>Streptococcus</taxon>
    </lineage>
</organism>
<dbReference type="EC" id="5.4.99.25" evidence="1"/>
<dbReference type="EMBL" id="CP000387">
    <property type="protein sequence ID" value="ABN44357.1"/>
    <property type="molecule type" value="Genomic_DNA"/>
</dbReference>
<dbReference type="RefSeq" id="WP_011836811.1">
    <property type="nucleotide sequence ID" value="NC_009009.1"/>
</dbReference>
<dbReference type="RefSeq" id="YP_001034907.1">
    <property type="nucleotide sequence ID" value="NC_009009.1"/>
</dbReference>
<dbReference type="SMR" id="A3CMF2"/>
<dbReference type="STRING" id="388919.SSA_0935"/>
<dbReference type="KEGG" id="ssa:SSA_0935"/>
<dbReference type="PATRIC" id="fig|388919.9.peg.889"/>
<dbReference type="eggNOG" id="COG0130">
    <property type="taxonomic scope" value="Bacteria"/>
</dbReference>
<dbReference type="HOGENOM" id="CLU_032087_0_1_9"/>
<dbReference type="OrthoDB" id="9802309at2"/>
<dbReference type="Proteomes" id="UP000002148">
    <property type="component" value="Chromosome"/>
</dbReference>
<dbReference type="GO" id="GO:0003723">
    <property type="term" value="F:RNA binding"/>
    <property type="evidence" value="ECO:0007669"/>
    <property type="project" value="InterPro"/>
</dbReference>
<dbReference type="GO" id="GO:0160148">
    <property type="term" value="F:tRNA pseudouridine(55) synthase activity"/>
    <property type="evidence" value="ECO:0007669"/>
    <property type="project" value="UniProtKB-EC"/>
</dbReference>
<dbReference type="GO" id="GO:1990481">
    <property type="term" value="P:mRNA pseudouridine synthesis"/>
    <property type="evidence" value="ECO:0007669"/>
    <property type="project" value="TreeGrafter"/>
</dbReference>
<dbReference type="GO" id="GO:0031119">
    <property type="term" value="P:tRNA pseudouridine synthesis"/>
    <property type="evidence" value="ECO:0007669"/>
    <property type="project" value="UniProtKB-UniRule"/>
</dbReference>
<dbReference type="CDD" id="cd02573">
    <property type="entry name" value="PseudoU_synth_EcTruB"/>
    <property type="match status" value="1"/>
</dbReference>
<dbReference type="FunFam" id="3.30.2350.10:FF:000011">
    <property type="entry name" value="tRNA pseudouridine synthase B"/>
    <property type="match status" value="1"/>
</dbReference>
<dbReference type="Gene3D" id="3.30.2350.10">
    <property type="entry name" value="Pseudouridine synthase"/>
    <property type="match status" value="1"/>
</dbReference>
<dbReference type="HAMAP" id="MF_01080">
    <property type="entry name" value="TruB_bact"/>
    <property type="match status" value="1"/>
</dbReference>
<dbReference type="InterPro" id="IPR020103">
    <property type="entry name" value="PsdUridine_synth_cat_dom_sf"/>
</dbReference>
<dbReference type="InterPro" id="IPR002501">
    <property type="entry name" value="PsdUridine_synth_N"/>
</dbReference>
<dbReference type="InterPro" id="IPR014780">
    <property type="entry name" value="tRNA_psdUridine_synth_TruB"/>
</dbReference>
<dbReference type="InterPro" id="IPR032819">
    <property type="entry name" value="TruB_C"/>
</dbReference>
<dbReference type="NCBIfam" id="TIGR00431">
    <property type="entry name" value="TruB"/>
    <property type="match status" value="1"/>
</dbReference>
<dbReference type="PANTHER" id="PTHR13767:SF2">
    <property type="entry name" value="PSEUDOURIDYLATE SYNTHASE TRUB1"/>
    <property type="match status" value="1"/>
</dbReference>
<dbReference type="PANTHER" id="PTHR13767">
    <property type="entry name" value="TRNA-PSEUDOURIDINE SYNTHASE"/>
    <property type="match status" value="1"/>
</dbReference>
<dbReference type="Pfam" id="PF16198">
    <property type="entry name" value="TruB_C_2"/>
    <property type="match status" value="1"/>
</dbReference>
<dbReference type="Pfam" id="PF01509">
    <property type="entry name" value="TruB_N"/>
    <property type="match status" value="1"/>
</dbReference>
<dbReference type="SUPFAM" id="SSF55120">
    <property type="entry name" value="Pseudouridine synthase"/>
    <property type="match status" value="1"/>
</dbReference>
<comment type="function">
    <text evidence="1">Responsible for synthesis of pseudouridine from uracil-55 in the psi GC loop of transfer RNAs.</text>
</comment>
<comment type="catalytic activity">
    <reaction evidence="1">
        <text>uridine(55) in tRNA = pseudouridine(55) in tRNA</text>
        <dbReference type="Rhea" id="RHEA:42532"/>
        <dbReference type="Rhea" id="RHEA-COMP:10101"/>
        <dbReference type="Rhea" id="RHEA-COMP:10102"/>
        <dbReference type="ChEBI" id="CHEBI:65314"/>
        <dbReference type="ChEBI" id="CHEBI:65315"/>
        <dbReference type="EC" id="5.4.99.25"/>
    </reaction>
</comment>
<comment type="similarity">
    <text evidence="1">Belongs to the pseudouridine synthase TruB family. Type 1 subfamily.</text>
</comment>
<proteinExistence type="inferred from homology"/>
<sequence>MNGIINLRKEAGMTSHDAVFKLRKILKTKKIGHGGTLDPDVVGVLPIAVGKATRLVEFMQEEGKVYEGEITLGCSTTTEDASGDILDRTPVTELLEEALIDEAMESMTGEIRQIPPMYSAVKVNGRKLYEYARAGQEVERPERQVTIYSFKRTSPISYEDEQARFRFRVKCSKGTYVRTLSVDLGAKLGFASHMSQLTRTFSAGMSLDDALTLDEIAERVAVDDFSFLQPLELGIGDLVRVELSDEQVEDVRNGRFISLMSEEAELAGFYKEKLIAILEKREEAYKPRKVFL</sequence>
<protein>
    <recommendedName>
        <fullName evidence="1">tRNA pseudouridine synthase B</fullName>
        <ecNumber evidence="1">5.4.99.25</ecNumber>
    </recommendedName>
    <alternativeName>
        <fullName evidence="1">tRNA pseudouridine(55) synthase</fullName>
        <shortName evidence="1">Psi55 synthase</shortName>
    </alternativeName>
    <alternativeName>
        <fullName evidence="1">tRNA pseudouridylate synthase</fullName>
    </alternativeName>
    <alternativeName>
        <fullName evidence="1">tRNA-uridine isomerase</fullName>
    </alternativeName>
</protein>